<organism>
    <name type="scientific">Shewanella oneidensis (strain ATCC 700550 / JCM 31522 / CIP 106686 / LMG 19005 / NCIMB 14063 / MR-1)</name>
    <dbReference type="NCBI Taxonomy" id="211586"/>
    <lineage>
        <taxon>Bacteria</taxon>
        <taxon>Pseudomonadati</taxon>
        <taxon>Pseudomonadota</taxon>
        <taxon>Gammaproteobacteria</taxon>
        <taxon>Alteromonadales</taxon>
        <taxon>Shewanellaceae</taxon>
        <taxon>Shewanella</taxon>
    </lineage>
</organism>
<feature type="signal peptide" evidence="1">
    <location>
        <begin position="1"/>
        <end position="22"/>
    </location>
</feature>
<feature type="chain" id="PRO_0000353979" description="Membrane-bound lytic murein transglycosylase F">
    <location>
        <begin position="23"/>
        <end position="478"/>
    </location>
</feature>
<feature type="region of interest" description="Non-LT domain" evidence="1">
    <location>
        <begin position="23"/>
        <end position="257"/>
    </location>
</feature>
<feature type="region of interest" description="LT domain" evidence="1">
    <location>
        <begin position="258"/>
        <end position="478"/>
    </location>
</feature>
<feature type="region of interest" description="Disordered" evidence="2">
    <location>
        <begin position="447"/>
        <end position="478"/>
    </location>
</feature>
<feature type="active site" evidence="1">
    <location>
        <position position="302"/>
    </location>
</feature>
<name>MLTF_SHEON</name>
<gene>
    <name evidence="1" type="primary">mltF</name>
    <name type="ordered locus">SO_3288</name>
</gene>
<comment type="function">
    <text evidence="1">Murein-degrading enzyme that degrades murein glycan strands and insoluble, high-molecular weight murein sacculi, with the concomitant formation of a 1,6-anhydromuramoyl product. Lytic transglycosylases (LTs) play an integral role in the metabolism of the peptidoglycan (PG) sacculus. Their lytic action creates space within the PG sacculus to allow for its expansion as well as for the insertion of various structures such as secretion systems and flagella.</text>
</comment>
<comment type="catalytic activity">
    <reaction evidence="1">
        <text>Exolytic cleavage of the (1-&gt;4)-beta-glycosidic linkage between N-acetylmuramic acid (MurNAc) and N-acetylglucosamine (GlcNAc) residues in peptidoglycan, from either the reducing or the non-reducing ends of the peptidoglycan chains, with concomitant formation of a 1,6-anhydrobond in the MurNAc residue.</text>
        <dbReference type="EC" id="4.2.2.n1"/>
    </reaction>
</comment>
<comment type="subcellular location">
    <subcellularLocation>
        <location>Cell outer membrane</location>
        <topology>Peripheral membrane protein</topology>
    </subcellularLocation>
    <text evidence="1">Attached to the inner leaflet of the outer membrane.</text>
</comment>
<comment type="domain">
    <text evidence="1">The N-terminal domain does not have lytic activity and probably modulates enzymatic activity. The C-terminal domain is the catalytic active domain.</text>
</comment>
<comment type="similarity">
    <text evidence="1">In the N-terminal section; belongs to the bacterial solute-binding protein 3 family.</text>
</comment>
<comment type="similarity">
    <text evidence="1">In the C-terminal section; belongs to the transglycosylase Slt family.</text>
</comment>
<reference key="1">
    <citation type="journal article" date="2002" name="Nat. Biotechnol.">
        <title>Genome sequence of the dissimilatory metal ion-reducing bacterium Shewanella oneidensis.</title>
        <authorList>
            <person name="Heidelberg J.F."/>
            <person name="Paulsen I.T."/>
            <person name="Nelson K.E."/>
            <person name="Gaidos E.J."/>
            <person name="Nelson W.C."/>
            <person name="Read T.D."/>
            <person name="Eisen J.A."/>
            <person name="Seshadri R."/>
            <person name="Ward N.L."/>
            <person name="Methe B.A."/>
            <person name="Clayton R.A."/>
            <person name="Meyer T."/>
            <person name="Tsapin A."/>
            <person name="Scott J."/>
            <person name="Beanan M.J."/>
            <person name="Brinkac L.M."/>
            <person name="Daugherty S.C."/>
            <person name="DeBoy R.T."/>
            <person name="Dodson R.J."/>
            <person name="Durkin A.S."/>
            <person name="Haft D.H."/>
            <person name="Kolonay J.F."/>
            <person name="Madupu R."/>
            <person name="Peterson J.D."/>
            <person name="Umayam L.A."/>
            <person name="White O."/>
            <person name="Wolf A.M."/>
            <person name="Vamathevan J.J."/>
            <person name="Weidman J.F."/>
            <person name="Impraim M."/>
            <person name="Lee K."/>
            <person name="Berry K.J."/>
            <person name="Lee C."/>
            <person name="Mueller J."/>
            <person name="Khouri H.M."/>
            <person name="Gill J."/>
            <person name="Utterback T.R."/>
            <person name="McDonald L.A."/>
            <person name="Feldblyum T.V."/>
            <person name="Smith H.O."/>
            <person name="Venter J.C."/>
            <person name="Nealson K.H."/>
            <person name="Fraser C.M."/>
        </authorList>
    </citation>
    <scope>NUCLEOTIDE SEQUENCE [LARGE SCALE GENOMIC DNA]</scope>
    <source>
        <strain>ATCC 700550 / JCM 31522 / CIP 106686 / LMG 19005 / NCIMB 14063 / MR-1</strain>
    </source>
</reference>
<accession>Q8EC56</accession>
<proteinExistence type="inferred from homology"/>
<dbReference type="EC" id="4.2.2.n1" evidence="1"/>
<dbReference type="EMBL" id="AE014299">
    <property type="protein sequence ID" value="AAN56286.2"/>
    <property type="molecule type" value="Genomic_DNA"/>
</dbReference>
<dbReference type="RefSeq" id="NP_718842.2">
    <property type="nucleotide sequence ID" value="NC_004347.2"/>
</dbReference>
<dbReference type="RefSeq" id="WP_011073169.1">
    <property type="nucleotide sequence ID" value="NC_004347.2"/>
</dbReference>
<dbReference type="SMR" id="Q8EC56"/>
<dbReference type="STRING" id="211586.SO_3288"/>
<dbReference type="CAZy" id="GH23">
    <property type="family name" value="Glycoside Hydrolase Family 23"/>
</dbReference>
<dbReference type="PaxDb" id="211586-SO_3288"/>
<dbReference type="KEGG" id="son:SO_3288"/>
<dbReference type="PATRIC" id="fig|211586.12.peg.3193"/>
<dbReference type="eggNOG" id="COG4623">
    <property type="taxonomic scope" value="Bacteria"/>
</dbReference>
<dbReference type="HOGENOM" id="CLU_027494_0_1_6"/>
<dbReference type="OrthoDB" id="9815002at2"/>
<dbReference type="PhylomeDB" id="Q8EC56"/>
<dbReference type="BioCyc" id="SONE211586:G1GMP-3065-MONOMER"/>
<dbReference type="Proteomes" id="UP000008186">
    <property type="component" value="Chromosome"/>
</dbReference>
<dbReference type="GO" id="GO:0009279">
    <property type="term" value="C:cell outer membrane"/>
    <property type="evidence" value="ECO:0000318"/>
    <property type="project" value="GO_Central"/>
</dbReference>
<dbReference type="GO" id="GO:0008933">
    <property type="term" value="F:peptidoglycan lytic transglycosylase activity"/>
    <property type="evidence" value="ECO:0000318"/>
    <property type="project" value="GO_Central"/>
</dbReference>
<dbReference type="GO" id="GO:0016998">
    <property type="term" value="P:cell wall macromolecule catabolic process"/>
    <property type="evidence" value="ECO:0007669"/>
    <property type="project" value="UniProtKB-UniRule"/>
</dbReference>
<dbReference type="GO" id="GO:0071555">
    <property type="term" value="P:cell wall organization"/>
    <property type="evidence" value="ECO:0007669"/>
    <property type="project" value="UniProtKB-KW"/>
</dbReference>
<dbReference type="GO" id="GO:0009253">
    <property type="term" value="P:peptidoglycan catabolic process"/>
    <property type="evidence" value="ECO:0000318"/>
    <property type="project" value="GO_Central"/>
</dbReference>
<dbReference type="CDD" id="cd13403">
    <property type="entry name" value="MLTF-like"/>
    <property type="match status" value="1"/>
</dbReference>
<dbReference type="CDD" id="cd01009">
    <property type="entry name" value="PBP2_YfhD_N"/>
    <property type="match status" value="1"/>
</dbReference>
<dbReference type="FunFam" id="1.10.530.10:FF:000003">
    <property type="entry name" value="Membrane-bound lytic murein transglycosylase F"/>
    <property type="match status" value="1"/>
</dbReference>
<dbReference type="Gene3D" id="1.10.530.10">
    <property type="match status" value="1"/>
</dbReference>
<dbReference type="Gene3D" id="3.40.190.10">
    <property type="entry name" value="Periplasmic binding protein-like II"/>
    <property type="match status" value="2"/>
</dbReference>
<dbReference type="HAMAP" id="MF_02016">
    <property type="entry name" value="MltF"/>
    <property type="match status" value="1"/>
</dbReference>
<dbReference type="InterPro" id="IPR023346">
    <property type="entry name" value="Lysozyme-like_dom_sf"/>
</dbReference>
<dbReference type="InterPro" id="IPR023703">
    <property type="entry name" value="MltF"/>
</dbReference>
<dbReference type="InterPro" id="IPR001638">
    <property type="entry name" value="Solute-binding_3/MltF_N"/>
</dbReference>
<dbReference type="InterPro" id="IPR008258">
    <property type="entry name" value="Transglycosylase_SLT_dom_1"/>
</dbReference>
<dbReference type="NCBIfam" id="NF008112">
    <property type="entry name" value="PRK10859.1"/>
    <property type="match status" value="1"/>
</dbReference>
<dbReference type="PANTHER" id="PTHR35936">
    <property type="entry name" value="MEMBRANE-BOUND LYTIC MUREIN TRANSGLYCOSYLASE F"/>
    <property type="match status" value="1"/>
</dbReference>
<dbReference type="PANTHER" id="PTHR35936:SF32">
    <property type="entry name" value="MEMBRANE-BOUND LYTIC MUREIN TRANSGLYCOSYLASE F"/>
    <property type="match status" value="1"/>
</dbReference>
<dbReference type="Pfam" id="PF00497">
    <property type="entry name" value="SBP_bac_3"/>
    <property type="match status" value="1"/>
</dbReference>
<dbReference type="Pfam" id="PF01464">
    <property type="entry name" value="SLT"/>
    <property type="match status" value="1"/>
</dbReference>
<dbReference type="SMART" id="SM00062">
    <property type="entry name" value="PBPb"/>
    <property type="match status" value="1"/>
</dbReference>
<dbReference type="SUPFAM" id="SSF53955">
    <property type="entry name" value="Lysozyme-like"/>
    <property type="match status" value="1"/>
</dbReference>
<dbReference type="SUPFAM" id="SSF53850">
    <property type="entry name" value="Periplasmic binding protein-like II"/>
    <property type="match status" value="1"/>
</dbReference>
<dbReference type="PROSITE" id="PS51257">
    <property type="entry name" value="PROKAR_LIPOPROTEIN"/>
    <property type="match status" value="1"/>
</dbReference>
<evidence type="ECO:0000255" key="1">
    <source>
        <dbReference type="HAMAP-Rule" id="MF_02016"/>
    </source>
</evidence>
<evidence type="ECO:0000256" key="2">
    <source>
        <dbReference type="SAM" id="MobiDB-lite"/>
    </source>
</evidence>
<sequence length="478" mass="54736">MTRFLFAIILGLLLTACQQETVEETEFVPHKLTELRVGTLYGPQIYMTSGQGNSGFDYDMAVLFAEYLDVPLKMVPYTNLAELYDALKKNEIDIIAAGMTETPARREHFRLGPPLYRVNQVLVYREGMPAPKDISDLKGKITVIADSSFVETLTQLQKRHPTLVWDQVTDKDNEELLTMIANKEIDYTIADSSSVQINRRYLPVLRSGLVLEEKLNVVWLLPPTHSDGLMSQLLAFWHQEKLAGTLDHLNEKYFGHVKRFDYIDTRAFLRAIETVLPRYRQHFETHAGDLDWRKLAATSYQESHWNPNARSPTGVRGMMMLTQPTAKEIGITNRLDAEESIRGGAAYLRDMINRLPESIPESQRMWFALASYNIGYAHVEDARKLAESMELNPNAWQDLKKVLPLLQKRKYYQKTRYGYARGSEAVHYVDSIRRYYDTLVWVDNQSKQQNSEEVAPSDLTAEETPVPAPGTLSPDKPK</sequence>
<protein>
    <recommendedName>
        <fullName evidence="1">Membrane-bound lytic murein transglycosylase F</fullName>
        <ecNumber evidence="1">4.2.2.n1</ecNumber>
    </recommendedName>
    <alternativeName>
        <fullName evidence="1">Murein lyase F</fullName>
    </alternativeName>
</protein>
<keyword id="KW-0998">Cell outer membrane</keyword>
<keyword id="KW-0961">Cell wall biogenesis/degradation</keyword>
<keyword id="KW-0456">Lyase</keyword>
<keyword id="KW-0472">Membrane</keyword>
<keyword id="KW-1185">Reference proteome</keyword>
<keyword id="KW-0732">Signal</keyword>